<evidence type="ECO:0000255" key="1">
    <source>
        <dbReference type="HAMAP-Rule" id="MF_00006"/>
    </source>
</evidence>
<reference key="1">
    <citation type="submission" date="2007-04" db="EMBL/GenBank/DDBJ databases">
        <title>Complete sequence of Roseiflexus sp. RS-1.</title>
        <authorList>
            <consortium name="US DOE Joint Genome Institute"/>
            <person name="Copeland A."/>
            <person name="Lucas S."/>
            <person name="Lapidus A."/>
            <person name="Barry K."/>
            <person name="Detter J.C."/>
            <person name="Glavina del Rio T."/>
            <person name="Hammon N."/>
            <person name="Israni S."/>
            <person name="Dalin E."/>
            <person name="Tice H."/>
            <person name="Pitluck S."/>
            <person name="Chertkov O."/>
            <person name="Brettin T."/>
            <person name="Bruce D."/>
            <person name="Han C."/>
            <person name="Schmutz J."/>
            <person name="Larimer F."/>
            <person name="Land M."/>
            <person name="Hauser L."/>
            <person name="Kyrpides N."/>
            <person name="Mikhailova N."/>
            <person name="Bryant D.A."/>
            <person name="Richardson P."/>
        </authorList>
    </citation>
    <scope>NUCLEOTIDE SEQUENCE [LARGE SCALE GENOMIC DNA]</scope>
    <source>
        <strain>RS-1</strain>
    </source>
</reference>
<gene>
    <name evidence="1" type="primary">argH</name>
    <name type="ordered locus">RoseRS_2403</name>
</gene>
<protein>
    <recommendedName>
        <fullName evidence="1">Argininosuccinate lyase</fullName>
        <shortName evidence="1">ASAL</shortName>
        <ecNumber evidence="1">4.3.2.1</ecNumber>
    </recommendedName>
    <alternativeName>
        <fullName evidence="1">Arginosuccinase</fullName>
    </alternativeName>
</protein>
<dbReference type="EC" id="4.3.2.1" evidence="1"/>
<dbReference type="EMBL" id="CP000686">
    <property type="protein sequence ID" value="ABQ90780.1"/>
    <property type="molecule type" value="Genomic_DNA"/>
</dbReference>
<dbReference type="RefSeq" id="WP_011957124.1">
    <property type="nucleotide sequence ID" value="NC_009523.1"/>
</dbReference>
<dbReference type="SMR" id="A5UVX7"/>
<dbReference type="STRING" id="357808.RoseRS_2403"/>
<dbReference type="KEGG" id="rrs:RoseRS_2403"/>
<dbReference type="eggNOG" id="COG0165">
    <property type="taxonomic scope" value="Bacteria"/>
</dbReference>
<dbReference type="HOGENOM" id="CLU_027272_2_1_0"/>
<dbReference type="OrthoDB" id="9769623at2"/>
<dbReference type="UniPathway" id="UPA00068">
    <property type="reaction ID" value="UER00114"/>
</dbReference>
<dbReference type="Proteomes" id="UP000006554">
    <property type="component" value="Chromosome"/>
</dbReference>
<dbReference type="GO" id="GO:0005829">
    <property type="term" value="C:cytosol"/>
    <property type="evidence" value="ECO:0007669"/>
    <property type="project" value="TreeGrafter"/>
</dbReference>
<dbReference type="GO" id="GO:0004056">
    <property type="term" value="F:argininosuccinate lyase activity"/>
    <property type="evidence" value="ECO:0007669"/>
    <property type="project" value="UniProtKB-UniRule"/>
</dbReference>
<dbReference type="GO" id="GO:0042450">
    <property type="term" value="P:arginine biosynthetic process via ornithine"/>
    <property type="evidence" value="ECO:0007669"/>
    <property type="project" value="InterPro"/>
</dbReference>
<dbReference type="GO" id="GO:0006526">
    <property type="term" value="P:L-arginine biosynthetic process"/>
    <property type="evidence" value="ECO:0007669"/>
    <property type="project" value="UniProtKB-UniRule"/>
</dbReference>
<dbReference type="CDD" id="cd01359">
    <property type="entry name" value="Argininosuccinate_lyase"/>
    <property type="match status" value="1"/>
</dbReference>
<dbReference type="FunFam" id="1.10.275.10:FF:000002">
    <property type="entry name" value="Argininosuccinate lyase"/>
    <property type="match status" value="1"/>
</dbReference>
<dbReference type="FunFam" id="1.10.40.30:FF:000001">
    <property type="entry name" value="Argininosuccinate lyase"/>
    <property type="match status" value="1"/>
</dbReference>
<dbReference type="FunFam" id="1.20.200.10:FF:000002">
    <property type="entry name" value="Argininosuccinate lyase"/>
    <property type="match status" value="1"/>
</dbReference>
<dbReference type="Gene3D" id="1.10.40.30">
    <property type="entry name" value="Fumarase/aspartase (C-terminal domain)"/>
    <property type="match status" value="1"/>
</dbReference>
<dbReference type="Gene3D" id="1.20.200.10">
    <property type="entry name" value="Fumarase/aspartase (Central domain)"/>
    <property type="match status" value="1"/>
</dbReference>
<dbReference type="Gene3D" id="1.10.275.10">
    <property type="entry name" value="Fumarase/aspartase (N-terminal domain)"/>
    <property type="match status" value="1"/>
</dbReference>
<dbReference type="HAMAP" id="MF_00006">
    <property type="entry name" value="Arg_succ_lyase"/>
    <property type="match status" value="1"/>
</dbReference>
<dbReference type="InterPro" id="IPR029419">
    <property type="entry name" value="Arg_succ_lyase_C"/>
</dbReference>
<dbReference type="InterPro" id="IPR009049">
    <property type="entry name" value="Argininosuccinate_lyase"/>
</dbReference>
<dbReference type="InterPro" id="IPR024083">
    <property type="entry name" value="Fumarase/histidase_N"/>
</dbReference>
<dbReference type="InterPro" id="IPR020557">
    <property type="entry name" value="Fumarate_lyase_CS"/>
</dbReference>
<dbReference type="InterPro" id="IPR000362">
    <property type="entry name" value="Fumarate_lyase_fam"/>
</dbReference>
<dbReference type="InterPro" id="IPR022761">
    <property type="entry name" value="Fumarate_lyase_N"/>
</dbReference>
<dbReference type="InterPro" id="IPR008948">
    <property type="entry name" value="L-Aspartase-like"/>
</dbReference>
<dbReference type="NCBIfam" id="TIGR00838">
    <property type="entry name" value="argH"/>
    <property type="match status" value="1"/>
</dbReference>
<dbReference type="PANTHER" id="PTHR43814">
    <property type="entry name" value="ARGININOSUCCINATE LYASE"/>
    <property type="match status" value="1"/>
</dbReference>
<dbReference type="PANTHER" id="PTHR43814:SF1">
    <property type="entry name" value="ARGININOSUCCINATE LYASE"/>
    <property type="match status" value="1"/>
</dbReference>
<dbReference type="Pfam" id="PF14698">
    <property type="entry name" value="ASL_C2"/>
    <property type="match status" value="1"/>
</dbReference>
<dbReference type="Pfam" id="PF00206">
    <property type="entry name" value="Lyase_1"/>
    <property type="match status" value="1"/>
</dbReference>
<dbReference type="PRINTS" id="PR00145">
    <property type="entry name" value="ARGSUCLYASE"/>
</dbReference>
<dbReference type="PRINTS" id="PR00149">
    <property type="entry name" value="FUMRATELYASE"/>
</dbReference>
<dbReference type="SUPFAM" id="SSF48557">
    <property type="entry name" value="L-aspartase-like"/>
    <property type="match status" value="1"/>
</dbReference>
<dbReference type="PROSITE" id="PS00163">
    <property type="entry name" value="FUMARATE_LYASES"/>
    <property type="match status" value="1"/>
</dbReference>
<proteinExistence type="inferred from homology"/>
<name>ARLY_ROSS1</name>
<keyword id="KW-0028">Amino-acid biosynthesis</keyword>
<keyword id="KW-0055">Arginine biosynthesis</keyword>
<keyword id="KW-0963">Cytoplasm</keyword>
<keyword id="KW-0456">Lyase</keyword>
<accession>A5UVX7</accession>
<sequence>MWGGRFNEQVDALMAQFNNSFSFDRRMWREDIRGSIAWARQLARVGVISAEERDTLVDGLNMVYAEFADGRFEARETDEDIHTAVERRLGELVGTVAGKLHTGRSRNDQVATDVRLWTLGAIRRIDDRLRALQTALLAQAETAGAALMPGYTHLQRAQPVLLAHWLLAHFWPLQRDRERLADCAKRTATLPLGSGAIAGTPLMVDRTALAVELGMTAVSPNSIDAVSDRDFIAEFLFCAALIGTHLSRLAEDMIIYSSAEFGFVTLADAYSTGSSLMPQKKNPDSFELLRGKAGRLTGDLIAVLTMLKGLPSAYDKDLQEDKEPLFDAADTLELALPVAAGAVATARFHPDRMRAALDDAMLATDLADYLVARGVPFREAHHIVGRLVREAEQRGVALSALPLEVFLAAHPVCEPDVLQVFDFDRSVAMRRVPGATAPEAVNEQIAQARRCVEER</sequence>
<feature type="chain" id="PRO_0000321450" description="Argininosuccinate lyase">
    <location>
        <begin position="1"/>
        <end position="455"/>
    </location>
</feature>
<organism>
    <name type="scientific">Roseiflexus sp. (strain RS-1)</name>
    <dbReference type="NCBI Taxonomy" id="357808"/>
    <lineage>
        <taxon>Bacteria</taxon>
        <taxon>Bacillati</taxon>
        <taxon>Chloroflexota</taxon>
        <taxon>Chloroflexia</taxon>
        <taxon>Chloroflexales</taxon>
        <taxon>Roseiflexineae</taxon>
        <taxon>Roseiflexaceae</taxon>
        <taxon>Roseiflexus</taxon>
    </lineage>
</organism>
<comment type="catalytic activity">
    <reaction evidence="1">
        <text>2-(N(omega)-L-arginino)succinate = fumarate + L-arginine</text>
        <dbReference type="Rhea" id="RHEA:24020"/>
        <dbReference type="ChEBI" id="CHEBI:29806"/>
        <dbReference type="ChEBI" id="CHEBI:32682"/>
        <dbReference type="ChEBI" id="CHEBI:57472"/>
        <dbReference type="EC" id="4.3.2.1"/>
    </reaction>
</comment>
<comment type="pathway">
    <text evidence="1">Amino-acid biosynthesis; L-arginine biosynthesis; L-arginine from L-ornithine and carbamoyl phosphate: step 3/3.</text>
</comment>
<comment type="subcellular location">
    <subcellularLocation>
        <location evidence="1">Cytoplasm</location>
    </subcellularLocation>
</comment>
<comment type="similarity">
    <text evidence="1">Belongs to the lyase 1 family. Argininosuccinate lyase subfamily.</text>
</comment>